<keyword id="KW-0002">3D-structure</keyword>
<keyword id="KW-0175">Coiled coil</keyword>
<keyword id="KW-1035">Host cytoplasm</keyword>
<keyword id="KW-0945">Host-virus interaction</keyword>
<keyword id="KW-1224">Inhibition of host IKBKE by virus</keyword>
<keyword id="KW-1090">Inhibition of host innate immune response by virus</keyword>
<keyword id="KW-1093">Inhibition of host IRF7 by virus</keyword>
<keyword id="KW-1113">Inhibition of host RLR pathway by virus</keyword>
<keyword id="KW-1223">Inhibition of host TBK1 by virus</keyword>
<keyword id="KW-1225">Inhibition of host TLR pathway by virus</keyword>
<keyword id="KW-0922">Interferon antiviral system evasion</keyword>
<keyword id="KW-1017">Isopeptide bond</keyword>
<keyword id="KW-0597">Phosphoprotein</keyword>
<keyword id="KW-1185">Reference proteome</keyword>
<keyword id="KW-0694">RNA-binding</keyword>
<keyword id="KW-0941">Suppressor of RNA silencing</keyword>
<keyword id="KW-0804">Transcription</keyword>
<keyword id="KW-0832">Ubl conjugation</keyword>
<keyword id="KW-0899">Viral immunoevasion</keyword>
<keyword id="KW-0693">Viral RNA replication</keyword>
<keyword id="KW-0946">Virion</keyword>
<feature type="chain" id="PRO_0000222161" description="Polymerase cofactor VP35">
    <location>
        <begin position="1"/>
        <end position="340"/>
    </location>
</feature>
<feature type="domain" description="VP35 IID" evidence="5">
    <location>
        <begin position="215"/>
        <end position="340"/>
    </location>
</feature>
<feature type="region of interest" description="Chaperones the nucleoprotein" evidence="1">
    <location>
        <begin position="1"/>
        <end position="49"/>
    </location>
</feature>
<feature type="region of interest" description="Disordered" evidence="6">
    <location>
        <begin position="1"/>
        <end position="24"/>
    </location>
</feature>
<feature type="region of interest" description="Disordered" evidence="23">
    <location>
        <begin position="33"/>
        <end position="48"/>
    </location>
</feature>
<feature type="region of interest" description="NP binding region" evidence="23">
    <location>
        <begin position="33"/>
        <end position="48"/>
    </location>
</feature>
<feature type="region of interest" description="Homooligomerization" evidence="3">
    <location>
        <begin position="83"/>
        <end position="145"/>
    </location>
</feature>
<feature type="coiled-coil region" evidence="4">
    <location>
        <begin position="96"/>
        <end position="116"/>
    </location>
</feature>
<feature type="short sequence motif" description="Required for host DYNLL1 interaction" evidence="16">
    <location>
        <begin position="71"/>
        <end position="75"/>
    </location>
</feature>
<feature type="modified residue" description="Phosphoserine; by host" evidence="27 28">
    <location>
        <position position="187"/>
    </location>
</feature>
<feature type="modified residue" description="Phosphoserine; by host" evidence="27 28">
    <location>
        <position position="205"/>
    </location>
</feature>
<feature type="modified residue" description="Phosphothreonine; by host" evidence="27 28">
    <location>
        <position position="206"/>
    </location>
</feature>
<feature type="modified residue" description="Phosphothreonine; by host" evidence="27">
    <location>
        <position position="207"/>
    </location>
</feature>
<feature type="modified residue" description="Phosphoserine; by host" evidence="27 28">
    <location>
        <position position="208"/>
    </location>
</feature>
<feature type="modified residue" description="Phosphothreonine; by host" evidence="27">
    <location>
        <position position="210"/>
    </location>
</feature>
<feature type="modified residue" description="Phosphoserine; by host" evidence="27">
    <location>
        <position position="310"/>
    </location>
</feature>
<feature type="modified residue" description="Phosphoserine; by host" evidence="27 28">
    <location>
        <position position="317"/>
    </location>
</feature>
<feature type="cross-link" description="Glycyl lysine isopeptide (Lys-Gly) (interchain with G-Cter in ubiquitin)" evidence="25 29">
    <location>
        <position position="309"/>
    </location>
</feature>
<feature type="sequence variant" description="In strain: Isolate mouse-adapted.">
    <original>A</original>
    <variation>V</variation>
    <location>
        <position position="12"/>
    </location>
</feature>
<feature type="mutagenesis site" description="Complete loss of homotrimerization; when associated with A-107." evidence="10">
    <original>LASL</original>
    <variation>AASA</variation>
    <location>
        <begin position="90"/>
        <end position="93"/>
    </location>
</feature>
<feature type="mutagenesis site" description="Complete loss of homotrimerization; when associated with 90-AASA-93." evidence="10">
    <original>L</original>
    <variation>A</variation>
    <location>
        <position position="107"/>
    </location>
</feature>
<feature type="mutagenesis site" description="Impaired viral replication." evidence="28">
    <original>S</original>
    <variation>A</variation>
    <location>
        <position position="187"/>
    </location>
</feature>
<feature type="mutagenesis site" description="No effect on viral replication." evidence="28">
    <original>S</original>
    <variation>D</variation>
    <location>
        <position position="187"/>
    </location>
</feature>
<feature type="mutagenesis site" description="Loss of viral transcription and reduced binding to the nucleoprotein." evidence="27">
    <original>T</original>
    <variation>A</variation>
    <location>
        <position position="210"/>
    </location>
</feature>
<feature type="mutagenesis site" description="No effect on viral transcription and binding to the nucleoprotein." evidence="27">
    <original>T</original>
    <variation>D</variation>
    <location>
        <position position="210"/>
    </location>
</feature>
<feature type="mutagenesis site" description="Complete loss of interaction with host PRKRA and subsequent immune response inhibition." evidence="20">
    <original>F</original>
    <variation>A</variation>
    <location>
        <position position="239"/>
    </location>
</feature>
<feature type="mutagenesis site" description="No effect on IRF3 promoter inhibition." evidence="9">
    <original>R</original>
    <variation>A</variation>
    <location>
        <position position="305"/>
    </location>
</feature>
<feature type="mutagenesis site" description="Partial loss of IRF3 promoter inhibition. Complete loss of dsRNA-binding." evidence="9 12">
    <original>K</original>
    <variation>A</variation>
    <location>
        <position position="309"/>
    </location>
</feature>
<feature type="mutagenesis site" description="Partial loss of the ability to efficiently antagonize the type I IFN response." evidence="29">
    <original>K</original>
    <variation>R</variation>
    <location>
        <position position="309"/>
    </location>
</feature>
<feature type="mutagenesis site" description="Complete loss of IRF3 promoter inhibition; dsRNA-binding and interaction with host PRKRA." evidence="9 12 20">
    <original>R</original>
    <variation>A</variation>
    <location>
        <position position="312"/>
    </location>
</feature>
<feature type="mutagenesis site" description="Impaired viral replication." evidence="28">
    <original>S</original>
    <variation>A</variation>
    <location>
        <position position="317"/>
    </location>
</feature>
<feature type="mutagenesis site" description="No effect on viral replication." evidence="28">
    <original>S</original>
    <variation>D</variation>
    <location>
        <position position="317"/>
    </location>
</feature>
<feature type="mutagenesis site" description="Complete loss of dsRNA binding activity; when associated with A-322." evidence="18">
    <original>K</original>
    <variation>A</variation>
    <location>
        <position position="319"/>
    </location>
</feature>
<feature type="mutagenesis site" description="Complete loss of dsRNA binding activity; when associated with A-319." evidence="18">
    <original>R</original>
    <variation>A</variation>
    <location>
        <position position="322"/>
    </location>
</feature>
<feature type="helix" evidence="35">
    <location>
        <begin position="28"/>
        <end position="34"/>
    </location>
</feature>
<feature type="helix" evidence="35">
    <location>
        <begin position="40"/>
        <end position="42"/>
    </location>
</feature>
<feature type="helix" evidence="36">
    <location>
        <begin position="83"/>
        <end position="118"/>
    </location>
</feature>
<feature type="helix" evidence="36">
    <location>
        <begin position="119"/>
        <end position="123"/>
    </location>
</feature>
<feature type="helix" evidence="36">
    <location>
        <begin position="124"/>
        <end position="140"/>
    </location>
</feature>
<feature type="helix" evidence="33">
    <location>
        <begin position="221"/>
        <end position="229"/>
    </location>
</feature>
<feature type="strand" evidence="33">
    <location>
        <begin position="232"/>
        <end position="236"/>
    </location>
</feature>
<feature type="helix" evidence="33">
    <location>
        <begin position="238"/>
        <end position="252"/>
    </location>
</feature>
<feature type="helix" evidence="33">
    <location>
        <begin position="256"/>
        <end position="269"/>
    </location>
</feature>
<feature type="helix" evidence="33">
    <location>
        <begin position="273"/>
        <end position="283"/>
    </location>
</feature>
<feature type="helix" evidence="33">
    <location>
        <begin position="285"/>
        <end position="287"/>
    </location>
</feature>
<feature type="strand" evidence="33">
    <location>
        <begin position="294"/>
        <end position="299"/>
    </location>
</feature>
<feature type="helix" evidence="33">
    <location>
        <begin position="300"/>
        <end position="302"/>
    </location>
</feature>
<feature type="helix" evidence="33">
    <location>
        <begin position="305"/>
        <end position="310"/>
    </location>
</feature>
<feature type="helix" evidence="33">
    <location>
        <begin position="320"/>
        <end position="322"/>
    </location>
</feature>
<feature type="strand" evidence="33">
    <location>
        <begin position="324"/>
        <end position="330"/>
    </location>
</feature>
<feature type="strand" evidence="34">
    <location>
        <begin position="331"/>
        <end position="333"/>
    </location>
</feature>
<feature type="strand" evidence="33">
    <location>
        <begin position="335"/>
        <end position="339"/>
    </location>
</feature>
<evidence type="ECO:0000250" key="1">
    <source>
        <dbReference type="UniProtKB" id="Q5XX07"/>
    </source>
</evidence>
<evidence type="ECO:0000250" key="2">
    <source>
        <dbReference type="UniProtKB" id="Q6V1Q9"/>
    </source>
</evidence>
<evidence type="ECO:0000250" key="3">
    <source>
        <dbReference type="UniProtKB" id="Q8JPY0"/>
    </source>
</evidence>
<evidence type="ECO:0000255" key="4"/>
<evidence type="ECO:0000255" key="5">
    <source>
        <dbReference type="PROSITE-ProRule" id="PRU01071"/>
    </source>
</evidence>
<evidence type="ECO:0000256" key="6">
    <source>
        <dbReference type="SAM" id="MobiDB-lite"/>
    </source>
</evidence>
<evidence type="ECO:0000269" key="7">
    <source>
    </source>
</evidence>
<evidence type="ECO:0000269" key="8">
    <source>
    </source>
</evidence>
<evidence type="ECO:0000269" key="9">
    <source>
    </source>
</evidence>
<evidence type="ECO:0000269" key="10">
    <source>
    </source>
</evidence>
<evidence type="ECO:0000269" key="11">
    <source>
    </source>
</evidence>
<evidence type="ECO:0000269" key="12">
    <source>
    </source>
</evidence>
<evidence type="ECO:0000269" key="13">
    <source>
    </source>
</evidence>
<evidence type="ECO:0000269" key="14">
    <source>
    </source>
</evidence>
<evidence type="ECO:0000269" key="15">
    <source>
    </source>
</evidence>
<evidence type="ECO:0000269" key="16">
    <source>
    </source>
</evidence>
<evidence type="ECO:0000269" key="17">
    <source>
    </source>
</evidence>
<evidence type="ECO:0000269" key="18">
    <source>
    </source>
</evidence>
<evidence type="ECO:0000269" key="19">
    <source>
    </source>
</evidence>
<evidence type="ECO:0000269" key="20">
    <source>
    </source>
</evidence>
<evidence type="ECO:0000269" key="21">
    <source>
    </source>
</evidence>
<evidence type="ECO:0000269" key="22">
    <source>
    </source>
</evidence>
<evidence type="ECO:0000269" key="23">
    <source>
    </source>
</evidence>
<evidence type="ECO:0000269" key="24">
    <source>
    </source>
</evidence>
<evidence type="ECO:0000269" key="25">
    <source>
    </source>
</evidence>
<evidence type="ECO:0000269" key="26">
    <source>
    </source>
</evidence>
<evidence type="ECO:0000269" key="27">
    <source>
    </source>
</evidence>
<evidence type="ECO:0000269" key="28">
    <source>
    </source>
</evidence>
<evidence type="ECO:0000269" key="29">
    <source>
    </source>
</evidence>
<evidence type="ECO:0000269" key="30">
    <source>
    </source>
</evidence>
<evidence type="ECO:0000303" key="31">
    <source>
    </source>
</evidence>
<evidence type="ECO:0000305" key="32">
    <source>
    </source>
</evidence>
<evidence type="ECO:0007829" key="33">
    <source>
        <dbReference type="PDB" id="3FKE"/>
    </source>
</evidence>
<evidence type="ECO:0007829" key="34">
    <source>
        <dbReference type="PDB" id="4IJF"/>
    </source>
</evidence>
<evidence type="ECO:0007829" key="35">
    <source>
        <dbReference type="PDB" id="4ZTA"/>
    </source>
</evidence>
<evidence type="ECO:0007829" key="36">
    <source>
        <dbReference type="PDB" id="6GBO"/>
    </source>
</evidence>
<dbReference type="EMBL" id="X61274">
    <property type="protein sequence ID" value="CAA43578.1"/>
    <property type="molecule type" value="Genomic_RNA"/>
</dbReference>
<dbReference type="EMBL" id="L11365">
    <property type="protein sequence ID" value="AAB81002.1"/>
    <property type="molecule type" value="Genomic_RNA"/>
</dbReference>
<dbReference type="EMBL" id="AF086833">
    <property type="protein sequence ID" value="AAD14582.1"/>
    <property type="molecule type" value="Genomic_RNA"/>
</dbReference>
<dbReference type="EMBL" id="AF272001">
    <property type="protein sequence ID" value="AAG40165.1"/>
    <property type="molecule type" value="Genomic_RNA"/>
</dbReference>
<dbReference type="EMBL" id="AY142960">
    <property type="protein sequence ID" value="AAN37505.1"/>
    <property type="molecule type" value="Genomic_RNA"/>
</dbReference>
<dbReference type="EMBL" id="AF499101">
    <property type="protein sequence ID" value="AAM76032.1"/>
    <property type="molecule type" value="Genomic_RNA"/>
</dbReference>
<dbReference type="RefSeq" id="NP_066244.1">
    <property type="nucleotide sequence ID" value="NC_002549.1"/>
</dbReference>
<dbReference type="PDB" id="3FKE">
    <property type="method" value="X-ray"/>
    <property type="resolution" value="1.40 A"/>
    <property type="chains" value="A/B=215-340"/>
</dbReference>
<dbReference type="PDB" id="3L25">
    <property type="method" value="X-ray"/>
    <property type="resolution" value="2.00 A"/>
    <property type="chains" value="A/B/D/E=215-340"/>
</dbReference>
<dbReference type="PDB" id="3L26">
    <property type="method" value="X-ray"/>
    <property type="resolution" value="2.40 A"/>
    <property type="chains" value="A/B=215-340"/>
</dbReference>
<dbReference type="PDB" id="3L27">
    <property type="method" value="X-ray"/>
    <property type="resolution" value="1.95 A"/>
    <property type="chains" value="A/B/C/D=215-340"/>
</dbReference>
<dbReference type="PDB" id="3L28">
    <property type="method" value="X-ray"/>
    <property type="resolution" value="2.40 A"/>
    <property type="chains" value="A/B/C/D/E/F=215-338"/>
</dbReference>
<dbReference type="PDB" id="3L29">
    <property type="method" value="X-ray"/>
    <property type="resolution" value="1.70 A"/>
    <property type="chains" value="A/B=215-340"/>
</dbReference>
<dbReference type="PDB" id="4IBB">
    <property type="method" value="X-ray"/>
    <property type="resolution" value="1.75 A"/>
    <property type="chains" value="A/B=215-340"/>
</dbReference>
<dbReference type="PDB" id="4IBC">
    <property type="method" value="X-ray"/>
    <property type="resolution" value="1.74 A"/>
    <property type="chains" value="A/B=215-340"/>
</dbReference>
<dbReference type="PDB" id="4IBD">
    <property type="method" value="X-ray"/>
    <property type="resolution" value="1.84 A"/>
    <property type="chains" value="A/B=215-340"/>
</dbReference>
<dbReference type="PDB" id="4IBE">
    <property type="method" value="X-ray"/>
    <property type="resolution" value="1.95 A"/>
    <property type="chains" value="A/B=215-340"/>
</dbReference>
<dbReference type="PDB" id="4IBF">
    <property type="method" value="X-ray"/>
    <property type="resolution" value="2.29 A"/>
    <property type="chains" value="A/B=215-340"/>
</dbReference>
<dbReference type="PDB" id="4IBG">
    <property type="method" value="X-ray"/>
    <property type="resolution" value="1.41 A"/>
    <property type="chains" value="A/B=215-340"/>
</dbReference>
<dbReference type="PDB" id="4IBI">
    <property type="method" value="X-ray"/>
    <property type="resolution" value="1.47 A"/>
    <property type="chains" value="A/B=215-340"/>
</dbReference>
<dbReference type="PDB" id="4IBJ">
    <property type="method" value="X-ray"/>
    <property type="resolution" value="1.54 A"/>
    <property type="chains" value="A/B=215-340"/>
</dbReference>
<dbReference type="PDB" id="4IBK">
    <property type="method" value="X-ray"/>
    <property type="resolution" value="1.85 A"/>
    <property type="chains" value="A/B=215-340"/>
</dbReference>
<dbReference type="PDB" id="4IJE">
    <property type="method" value="X-ray"/>
    <property type="resolution" value="1.90 A"/>
    <property type="chains" value="A/B/C/D=218-340"/>
</dbReference>
<dbReference type="PDB" id="4IJF">
    <property type="method" value="X-ray"/>
    <property type="resolution" value="2.51 A"/>
    <property type="chains" value="A=218-340"/>
</dbReference>
<dbReference type="PDB" id="4YPI">
    <property type="method" value="X-ray"/>
    <property type="resolution" value="3.71 A"/>
    <property type="chains" value="E/F/G/H=20-47"/>
</dbReference>
<dbReference type="PDB" id="4ZTA">
    <property type="method" value="X-ray"/>
    <property type="resolution" value="2.40 A"/>
    <property type="chains" value="A=15-59"/>
</dbReference>
<dbReference type="PDB" id="4ZTG">
    <property type="method" value="X-ray"/>
    <property type="resolution" value="2.80 A"/>
    <property type="chains" value="A=15-59"/>
</dbReference>
<dbReference type="PDB" id="4ZTI">
    <property type="method" value="X-ray"/>
    <property type="resolution" value="2.40 A"/>
    <property type="chains" value="A/B=15-59"/>
</dbReference>
<dbReference type="PDB" id="6GBO">
    <property type="method" value="X-ray"/>
    <property type="resolution" value="2.10 A"/>
    <property type="chains" value="A/B/C/D/E/F/G/H/I/J/K/L=82-145"/>
</dbReference>
<dbReference type="PDB" id="6GBP">
    <property type="method" value="X-ray"/>
    <property type="resolution" value="3.49 A"/>
    <property type="chains" value="A/B/C/D/E/F/G/H/I/J/K/L=82-145"/>
</dbReference>
<dbReference type="PDB" id="8USN">
    <property type="method" value="EM"/>
    <property type="resolution" value="8.90 A"/>
    <property type="chains" value="F/K=1-340"/>
</dbReference>
<dbReference type="PDB" id="8UST">
    <property type="method" value="EM"/>
    <property type="resolution" value="7.30 A"/>
    <property type="chains" value="F/K=1-340"/>
</dbReference>
<dbReference type="PDBsum" id="3FKE"/>
<dbReference type="PDBsum" id="3L25"/>
<dbReference type="PDBsum" id="3L26"/>
<dbReference type="PDBsum" id="3L27"/>
<dbReference type="PDBsum" id="3L28"/>
<dbReference type="PDBsum" id="3L29"/>
<dbReference type="PDBsum" id="4IBB"/>
<dbReference type="PDBsum" id="4IBC"/>
<dbReference type="PDBsum" id="4IBD"/>
<dbReference type="PDBsum" id="4IBE"/>
<dbReference type="PDBsum" id="4IBF"/>
<dbReference type="PDBsum" id="4IBG"/>
<dbReference type="PDBsum" id="4IBI"/>
<dbReference type="PDBsum" id="4IBJ"/>
<dbReference type="PDBsum" id="4IBK"/>
<dbReference type="PDBsum" id="4IJE"/>
<dbReference type="PDBsum" id="4IJF"/>
<dbReference type="PDBsum" id="4YPI"/>
<dbReference type="PDBsum" id="4ZTA"/>
<dbReference type="PDBsum" id="4ZTG"/>
<dbReference type="PDBsum" id="4ZTI"/>
<dbReference type="PDBsum" id="6GBO"/>
<dbReference type="PDBsum" id="6GBP"/>
<dbReference type="PDBsum" id="8USN"/>
<dbReference type="PDBsum" id="8UST"/>
<dbReference type="EMDB" id="EMD-3872"/>
<dbReference type="EMDB" id="EMD-3873"/>
<dbReference type="EMDB" id="EMD-42509"/>
<dbReference type="SMR" id="Q05127"/>
<dbReference type="DIP" id="DIP-48771N"/>
<dbReference type="IntAct" id="Q05127">
    <property type="interactions" value="62"/>
</dbReference>
<dbReference type="iPTMnet" id="Q05127"/>
<dbReference type="ABCD" id="Q05127">
    <property type="antibodies" value="5 sequenced antibodies"/>
</dbReference>
<dbReference type="DNASU" id="911827"/>
<dbReference type="GeneID" id="911827"/>
<dbReference type="KEGG" id="vg:911827"/>
<dbReference type="EvolutionaryTrace" id="Q05127"/>
<dbReference type="Proteomes" id="UP000007209">
    <property type="component" value="Genome"/>
</dbReference>
<dbReference type="Proteomes" id="UP000109874">
    <property type="component" value="Genome"/>
</dbReference>
<dbReference type="Proteomes" id="UP000149419">
    <property type="component" value="Genome"/>
</dbReference>
<dbReference type="Proteomes" id="UP000150973">
    <property type="component" value="Genome"/>
</dbReference>
<dbReference type="Proteomes" id="UP000180447">
    <property type="component" value="Genome"/>
</dbReference>
<dbReference type="GO" id="GO:0030430">
    <property type="term" value="C:host cell cytoplasm"/>
    <property type="evidence" value="ECO:0007669"/>
    <property type="project" value="UniProtKB-SubCell"/>
</dbReference>
<dbReference type="GO" id="GO:0019013">
    <property type="term" value="C:viral nucleocapsid"/>
    <property type="evidence" value="ECO:0000314"/>
    <property type="project" value="CACAO"/>
</dbReference>
<dbReference type="GO" id="GO:0140313">
    <property type="term" value="F:molecular sequestering activity"/>
    <property type="evidence" value="ECO:0000353"/>
    <property type="project" value="DisProt"/>
</dbReference>
<dbReference type="GO" id="GO:0003723">
    <property type="term" value="F:RNA binding"/>
    <property type="evidence" value="ECO:0007669"/>
    <property type="project" value="UniProtKB-KW"/>
</dbReference>
<dbReference type="GO" id="GO:0010629">
    <property type="term" value="P:negative regulation of gene expression"/>
    <property type="evidence" value="ECO:0000314"/>
    <property type="project" value="CACAO"/>
</dbReference>
<dbReference type="GO" id="GO:0060965">
    <property type="term" value="P:negative regulation of miRNA-mediated gene silencing"/>
    <property type="evidence" value="ECO:0000314"/>
    <property type="project" value="CACAO"/>
</dbReference>
<dbReference type="GO" id="GO:0033235">
    <property type="term" value="P:positive regulation of protein sumoylation"/>
    <property type="evidence" value="ECO:0000315"/>
    <property type="project" value="CACAO"/>
</dbReference>
<dbReference type="GO" id="GO:0039505">
    <property type="term" value="P:symbiont-mediated suppression of host antigen processing and presentation of peptide antigen via MHC class II"/>
    <property type="evidence" value="ECO:0000315"/>
    <property type="project" value="CACAO"/>
</dbReference>
<dbReference type="GO" id="GO:0039724">
    <property type="term" value="P:symbiont-mediated suppression of host cytoplasmic pattern recognition receptor signaling pathway via inhibition of IKBKE activity"/>
    <property type="evidence" value="ECO:0007669"/>
    <property type="project" value="UniProtKB-KW"/>
</dbReference>
<dbReference type="GO" id="GO:0039557">
    <property type="term" value="P:symbiont-mediated suppression of host cytoplasmic pattern recognition receptor signaling pathway via inhibition of IRF7 activity"/>
    <property type="evidence" value="ECO:0007669"/>
    <property type="project" value="UniProtKB-KW"/>
</dbReference>
<dbReference type="GO" id="GO:0039723">
    <property type="term" value="P:symbiont-mediated suppression of host cytoplasmic pattern recognition receptor signaling pathway via inhibition of TBK1 activity"/>
    <property type="evidence" value="ECO:0007669"/>
    <property type="project" value="UniProtKB-KW"/>
</dbReference>
<dbReference type="GO" id="GO:0044414">
    <property type="term" value="P:symbiont-mediated suppression of host defenses"/>
    <property type="evidence" value="ECO:0000315"/>
    <property type="project" value="CACAO"/>
</dbReference>
<dbReference type="GO" id="GO:0052170">
    <property type="term" value="P:symbiont-mediated suppression of host innate immune response"/>
    <property type="evidence" value="ECO:0000314"/>
    <property type="project" value="CACAO"/>
</dbReference>
<dbReference type="GO" id="GO:0039580">
    <property type="term" value="P:symbiont-mediated suppression of host PKR/eIFalpha signaling"/>
    <property type="evidence" value="ECO:0000269"/>
    <property type="project" value="SigSci"/>
</dbReference>
<dbReference type="GO" id="GO:0140533">
    <property type="term" value="P:symbiont-mediated suppression of host RNAi-mediated antiviral immune response"/>
    <property type="evidence" value="ECO:0000314"/>
    <property type="project" value="GO_Central"/>
</dbReference>
<dbReference type="GO" id="GO:0039722">
    <property type="term" value="P:symbiont-mediated suppression of host toll-like receptor signaling pathway"/>
    <property type="evidence" value="ECO:0007669"/>
    <property type="project" value="UniProtKB-KW"/>
</dbReference>
<dbReference type="GO" id="GO:0039502">
    <property type="term" value="P:symbiont-mediated suppression of host type I interferon-mediated signaling pathway"/>
    <property type="evidence" value="ECO:0000315"/>
    <property type="project" value="CACAO"/>
</dbReference>
<dbReference type="GO" id="GO:0019079">
    <property type="term" value="P:viral genome replication"/>
    <property type="evidence" value="ECO:0000314"/>
    <property type="project" value="DisProt"/>
</dbReference>
<dbReference type="GO" id="GO:0019083">
    <property type="term" value="P:viral transcription"/>
    <property type="evidence" value="ECO:0000314"/>
    <property type="project" value="DisProt"/>
</dbReference>
<dbReference type="CDD" id="cd21030">
    <property type="entry name" value="V35-RBD_P-protein-C_like"/>
    <property type="match status" value="1"/>
</dbReference>
<dbReference type="DisProt" id="DP00998"/>
<dbReference type="FunFam" id="1.10.8.950:FF:000001">
    <property type="entry name" value="Polymerase cofactor VP35"/>
    <property type="match status" value="1"/>
</dbReference>
<dbReference type="FunFam" id="2.10.10.70:FF:000001">
    <property type="entry name" value="Polymerase cofactor VP35"/>
    <property type="match status" value="1"/>
</dbReference>
<dbReference type="Gene3D" id="2.10.10.70">
    <property type="entry name" value="Filoviridae VP35, C-terminal inhibitory domain, beta-sheet subdomain"/>
    <property type="match status" value="1"/>
</dbReference>
<dbReference type="Gene3D" id="1.10.8.950">
    <property type="entry name" value="Filoviridae VP35, C-terminal inhibitory domain, helical subdomain"/>
    <property type="match status" value="1"/>
</dbReference>
<dbReference type="InterPro" id="IPR002953">
    <property type="entry name" value="Filo_VP35"/>
</dbReference>
<dbReference type="InterPro" id="IPR031163">
    <property type="entry name" value="VP35_IID"/>
</dbReference>
<dbReference type="InterPro" id="IPR043061">
    <property type="entry name" value="VP35_IID_b-sht"/>
</dbReference>
<dbReference type="InterPro" id="IPR043060">
    <property type="entry name" value="VP35_IID_hlx"/>
</dbReference>
<dbReference type="Pfam" id="PF02097">
    <property type="entry name" value="Filo_VP35"/>
    <property type="match status" value="1"/>
</dbReference>
<dbReference type="PIRSF" id="PIRSF018326">
    <property type="entry name" value="VP35_FiloV"/>
    <property type="match status" value="1"/>
</dbReference>
<dbReference type="PRINTS" id="PR01240">
    <property type="entry name" value="FILOVP35"/>
</dbReference>
<dbReference type="PROSITE" id="PS51735">
    <property type="entry name" value="VP35_IID"/>
    <property type="match status" value="1"/>
</dbReference>
<organismHost>
    <name type="scientific">Epomops franqueti</name>
    <name type="common">Franquet's epauletted fruit bat</name>
    <name type="synonym">Epomophorus franqueti</name>
    <dbReference type="NCBI Taxonomy" id="77231"/>
</organismHost>
<organismHost>
    <name type="scientific">Homo sapiens</name>
    <name type="common">Human</name>
    <dbReference type="NCBI Taxonomy" id="9606"/>
</organismHost>
<organismHost>
    <name type="scientific">Myonycteris torquata</name>
    <name type="common">Little collared fruit bat</name>
    <dbReference type="NCBI Taxonomy" id="77243"/>
</organismHost>
<sequence length="340" mass="37362">MTTRTKGRGHTAATTQNDRMPGPELSGWISEQLMTGRIPVSDIFCDIENNPGLCYASQMQQTKPNPKTRNSQTQTDPICNHSFEEVVQTLASLATVVQQQTIASESLEQRITSLENGLKPVYDMAKTISSLNRVCAEMVAKYDLLVMTTGRATATAAATEAYWAEHGQPPPGPSLYEESAIRGKIESRDETVPQSVREAFNNLNSTTSLTEENFGKPDISAKDLRNIMYDHLPGFGTAFHQLVQVICKLGKDSNSLDIIHAEFQASLAEGDSPQCALIQITKRVPIFQDAAPPVIHIRSRGDIPRACQKSLRPVPPSPKIDRGWVCVFQLQDGKTLGLKI</sequence>
<comment type="function">
    <text evidence="1 2 3 7 8 11 13 17 20 21 22 23 24 29 30">Plays an essential role in viral RNA synthesis and also a role in suppressing innate immune signaling (PubMed:11027311, PubMed:35533195). Acts as a polymerase cofactor in the RNA polymerase transcription and replication complexes (PubMed:16495261, PubMed:24495995, PubMed:9971816). Serves as nucleoprotein/NP monomer chaperone prior to the formation of the large oligomeric RNA-bound complexes (By similarity). Regulates RNA synthesis by modulating NP-RNA interactions and interacting with DYNLL1 (PubMed:25741013). VP35-NP interaction controls the switch between RNA-bound NP and free NP and thus the switch between genome replication and genome packaging into the nucleocapsid (PubMed:25865894). Prevents establishment of cellular antiviral state, thereby suppressing host DC maturation (PubMed:26962215). Acts by inhibiting host RIGI activation both by shielding dsRNA from detection and by preventing PRKRA binding to RIGI (PubMed:23870315). Blocks virus-induced phosphorylation and activation of interferon regulatory factor 3/IRF3, a transcription factor critical for the induction of interferons alpha and beta (PubMed:12829834). This blockage is produced through the interaction with and inhibition of host IKBKE and TBK1, producing a strong inhibition of the phosphorylation and activation of IRF3 (PubMed:12829834). Also inhibits the antiviral effect mediated by the host interferon-induced, double-stranded RNA-activated protein kinase EIF2AK2/PKR (PubMed:17065211). Increases PIAS1-mediated SUMOylation of IRF7, thereby repressing interferon transcription (PubMed:19557165). Also acts as a suppressor of RNA silencing by interacting with host DICER1, TARBP2/TRBP and PRKRA/PACT (By similarity). As a dimer, binds and sequesters dsRNA contributing to the inhibition of interferon production (By similarity).</text>
</comment>
<comment type="subunit">
    <text evidence="2 3 10 14 16 17 18 19 20 22 23 25 26 32">Homodimer (By similarity). Homooligomer; via the coiled coil domain (PubMed:16095644). Interacts with nucleoprotein NP and polymerase L; VP35 bridges L and NP and allows the formation of the polymerase complex (Probable) (PubMed:25865894). Also interacts with VP30; this interaction is regulated by VP30 phosphorylation (PubMed:23493393). Interacts with host IKBKE and TBK1; the interactions lead to inhibition of cellular antiviral response by blocking necessary interactions of IKBKE and TBK1 with their substrate IRF3. Interacts with host DYNLL1; this interaction stabilizes VP35 N-terminal oligomerization domain, enhances viral RNA synthesis but does not participate in suppressing the host innate immune response (PubMed:19403681, PubMed:25741013). Interacts with host PRKRA; this interaction inhibits the interaction between RIGI and PRKRA. Interacts with dsRNA (PubMed:19122151, PubMed:20071589, PubMed:23870315). Interacts with host TRIM6; this interaction plays an important role in promoting efficient viral replication (PubMed:28679761). Interacts with host STAU1 (PubMed:30301857). Interacts with host IRF7, PIAS1 and UBE2I/UBC9; these interactions mediate the sumoylation of IRF7 and contribute to the inhibition of IFN-type I production (PubMed:19557165). Interacts with host DICER1; this interaction prevents TARBP2/TRBP binding to DICER1 and thus allows the virus to counteract host RNA silencing (By similarity). Interacts with host TARBP2/TRBP and PRKRA/PACT; these interactions prevent TARBP2 and PRKRA binding to DICER1 and thus allows the virus to counteract host RNA silencing (By similarity).</text>
</comment>
<comment type="interaction">
    <interactant intactId="EBI-6148294">
        <id>Q05127</id>
    </interactant>
    <interactant intactId="EBI-9820219">
        <id>P18272</id>
        <label>NP</label>
    </interactant>
    <organismsDiffer>false</organismsDiffer>
    <experiments>2</experiments>
</comment>
<comment type="interaction">
    <interactant intactId="EBI-6148294">
        <id>Q05127</id>
    </interactant>
    <interactant intactId="EBI-307369">
        <id>Q14164</id>
        <label>IKBKE</label>
    </interactant>
    <organismsDiffer>true</organismsDiffer>
    <experiments>3</experiments>
</comment>
<comment type="interaction">
    <interactant intactId="EBI-6148294">
        <id>Q05127</id>
    </interactant>
    <interactant intactId="EBI-78756">
        <id>Q12906</id>
        <label>ILF3</label>
    </interactant>
    <organismsDiffer>true</organismsDiffer>
    <experiments>6</experiments>
</comment>
<comment type="interaction">
    <interactant intactId="EBI-6148294">
        <id>Q05127</id>
    </interactant>
    <interactant intactId="EBI-713955">
        <id>O75569</id>
        <label>PRKRA</label>
    </interactant>
    <organismsDiffer>true</organismsDiffer>
    <experiments>2</experiments>
</comment>
<comment type="interaction">
    <interactant intactId="EBI-6148294">
        <id>Q05127</id>
    </interactant>
    <interactant intactId="EBI-356402">
        <id>Q9UHD2</id>
        <label>TBK1</label>
    </interactant>
    <organismsDiffer>true</organismsDiffer>
    <experiments>2</experiments>
</comment>
<comment type="subcellular location">
    <subcellularLocation>
        <location>Virion</location>
    </subcellularLocation>
    <subcellularLocation>
        <location evidence="19 25">Host cytoplasm</location>
    </subcellularLocation>
</comment>
<comment type="domain">
    <text evidence="14">The interferon inhibitory domain (IID) binds dsRNA.</text>
</comment>
<comment type="PTM">
    <text evidence="15 27 28">Phosphorylated by host IKBKE (PubMed:19153231). Phosphorylation contributes to efficient viral replication and transcription (PubMed:31562565, PubMed:31694758).</text>
</comment>
<comment type="PTM">
    <text evidence="29">Ubiquitinated by host TRIM6 to facilitate virus replication.</text>
</comment>
<comment type="similarity">
    <text evidence="5">Belongs to the filoviridae polymerase cofactor VP35 family.</text>
</comment>
<organism>
    <name type="scientific">Zaire ebolavirus (strain Mayinga-76)</name>
    <name type="common">ZEBOV</name>
    <name type="synonym">Zaire Ebola virus</name>
    <dbReference type="NCBI Taxonomy" id="128952"/>
    <lineage>
        <taxon>Viruses</taxon>
        <taxon>Riboviria</taxon>
        <taxon>Orthornavirae</taxon>
        <taxon>Negarnaviricota</taxon>
        <taxon>Haploviricotina</taxon>
        <taxon>Monjiviricetes</taxon>
        <taxon>Mononegavirales</taxon>
        <taxon>Filoviridae</taxon>
        <taxon>Orthoebolavirus</taxon>
        <taxon>Orthoebolavirus zairense</taxon>
        <taxon>Zaire ebolavirus</taxon>
    </lineage>
</organism>
<reference key="1">
    <citation type="journal article" date="1993" name="FEBS Lett.">
        <title>The VP35 and VP40 proteins of filoviruses. Homology between Marburg and Ebola viruses.</title>
        <authorList>
            <person name="Bukreyev A.A."/>
            <person name="Volchkov V.E."/>
            <person name="Blinov V.M."/>
            <person name="Netesov S.V."/>
        </authorList>
    </citation>
    <scope>NUCLEOTIDE SEQUENCE [GENOMIC RNA]</scope>
</reference>
<reference key="2">
    <citation type="journal article" date="1993" name="Virus Res.">
        <title>Sequence analysis of the Ebola virus genome: organization, genetic elements, and comparison with the genome of Marburg virus.</title>
        <authorList>
            <person name="Sanchez A."/>
            <person name="Kiley M.P."/>
            <person name="Holloway B.P."/>
            <person name="Auperin D.D."/>
        </authorList>
    </citation>
    <scope>NUCLEOTIDE SEQUENCE [GENOMIC RNA]</scope>
</reference>
<reference key="3">
    <citation type="journal article" date="1999" name="J. Gen. Virol.">
        <title>Characterization of the L gene and 5' trailer region of Ebola virus.</title>
        <authorList>
            <person name="Volchkov V.E."/>
            <person name="Volchkova V.A."/>
            <person name="Chepurnov A.A."/>
            <person name="Blinov V.M."/>
            <person name="Netesov S.V."/>
            <person name="Feldmann H."/>
        </authorList>
    </citation>
    <scope>NUCLEOTIDE SEQUENCE [GENOMIC RNA]</scope>
</reference>
<reference key="4">
    <citation type="journal article" date="2000" name="Virology">
        <title>Molecular characterization of guinea pig-adapted variants of Ebola virus.</title>
        <authorList>
            <person name="Volchkov V.E."/>
            <person name="Chepurnov A.A."/>
            <person name="Volchkova V.A."/>
            <person name="Ternovoj V.A."/>
            <person name="Klenk H.D."/>
        </authorList>
    </citation>
    <scope>NUCLEOTIDE SEQUENCE [GENOMIC RNA]</scope>
    <source>
        <strain>Isolate guinea pig-adapted</strain>
    </source>
</reference>
<reference key="5">
    <citation type="submission" date="2002-08" db="EMBL/GenBank/DDBJ databases">
        <authorList>
            <person name="Wilson J.A."/>
            <person name="Kondig J.P."/>
            <person name="Kuehne A.I."/>
            <person name="Hart M.K."/>
        </authorList>
    </citation>
    <scope>NUCLEOTIDE SEQUENCE [GENOMIC RNA]</scope>
    <source>
        <strain>Isolate mouse-adapted</strain>
    </source>
</reference>
<reference key="6">
    <citation type="journal article" date="1999" name="J. Virol.">
        <title>Comparison of the transcription and replication strategies of marburg virus and Ebola virus by using artificial replication systems.</title>
        <authorList>
            <person name="Muhlberger E."/>
            <person name="Weik M."/>
            <person name="Volchkov V.E."/>
            <person name="Klenk H.D."/>
            <person name="Becker S."/>
        </authorList>
    </citation>
    <scope>FUNCTION IN VIRAL REPLICATION</scope>
</reference>
<reference key="7">
    <citation type="journal article" date="2000" name="Proc. Natl. Acad. Sci. U.S.A.">
        <title>The Ebola virus VP35 protein functions as a type I IFN antagonist.</title>
        <authorList>
            <person name="Basler C.F."/>
            <person name="Wang X."/>
            <person name="Muhlberger E."/>
            <person name="Volchkov V.E."/>
            <person name="Paragas J."/>
            <person name="Klenk H.D."/>
            <person name="Garcia-Sastre A."/>
            <person name="Palese P."/>
        </authorList>
    </citation>
    <scope>FUNCTION</scope>
</reference>
<reference key="8">
    <citation type="journal article" date="2002" name="Mol. Cell">
        <title>The assembly of Ebola virus nucleocapsid requires virion-associated proteins 35 and 24 and posttranslational modification of nucleoprotein.</title>
        <authorList>
            <person name="Huang Y."/>
            <person name="Xu L."/>
            <person name="Sun Y."/>
            <person name="Nabel G.J."/>
        </authorList>
    </citation>
    <scope>INTERACTION WITH THE NUCLEOPROTEIN</scope>
</reference>
<reference key="9">
    <citation type="journal article" date="2003" name="J. Virol.">
        <title>The Ebola virus VP35 protein inhibits activation of interferon regulatory factor 3.</title>
        <authorList>
            <person name="Basler C.F."/>
            <person name="Mikulasova A."/>
            <person name="Martinez-Sobrido L."/>
            <person name="Paragas J."/>
            <person name="Muhlberger E."/>
            <person name="Bray M."/>
            <person name="Klenk H.D."/>
            <person name="Palese P."/>
            <person name="Garcia-Sastre A."/>
        </authorList>
    </citation>
    <scope>FUNCTION</scope>
</reference>
<reference key="10">
    <citation type="journal article" date="2004" name="Virology">
        <title>A C-terminal basic amino acid motif of Zaire ebolavirus VP35 is essential for type I interferon antagonism and displays high identity with the RNA-binding domain of another interferon antagonist, the NS1 protein of influenza A virus.</title>
        <authorList>
            <person name="Hartman A.L."/>
            <person name="Towner J.S."/>
            <person name="Nichol S.T."/>
        </authorList>
    </citation>
    <scope>MUTAGENESIS OF ARG-305; LYS-309 AND ARG-312</scope>
</reference>
<reference key="11">
    <citation type="journal article" date="2005" name="Virology">
        <title>Homo-oligomerization facilitates the interferon-antagonist activity of the ebolavirus VP35 protein.</title>
        <authorList>
            <person name="Reid S.P."/>
            <person name="Cardenas W.B."/>
            <person name="Basler C.F."/>
        </authorList>
    </citation>
    <scope>SUBUNIT</scope>
    <scope>MUTAGENESIS OF 90-LEU--LEU-93 AND LEU-107</scope>
</reference>
<reference key="12">
    <citation type="journal article" date="2006" name="J. Virol.">
        <title>Ebola virus VP35 Protein binds double-Stranded RNA and inhibits alpha/beta interferon production induced by RIG-I signaling.</title>
        <authorList>
            <person name="Cardenas W.B."/>
            <person name="Loo Y.M."/>
            <person name="Gale M. Jr."/>
            <person name="Hartman A.L."/>
            <person name="Kimberlin C.R."/>
            <person name="Martinez-Sobrido L."/>
            <person name="Saphire E.O."/>
            <person name="Basler C.F."/>
        </authorList>
    </citation>
    <scope>CHARACTERIZATION OF RNA-BINDING ACTIVITY</scope>
    <scope>MUTAGENESIS OF LYS-309 AND ARG-312</scope>
</reference>
<reference key="13">
    <citation type="journal article" date="2006" name="J. Virol.">
        <title>Ebola virus VP35-VP40 interaction is sufficient for packaging 3E-5E minigenome RNA into virus-like particles.</title>
        <authorList>
            <person name="Johnson R.F."/>
            <person name="McCarthy S.E."/>
            <person name="Godlewski P.J."/>
            <person name="Harty R.N."/>
        </authorList>
    </citation>
    <scope>INTERACTION WITH VP40</scope>
</reference>
<reference key="14">
    <citation type="journal article" date="2006" name="Antimicrob. Agents Chemother.">
        <title>VP35 knockdown inhibits Ebola virus amplification and protects against lethal infection in mice.</title>
        <authorList>
            <person name="Enterlein S."/>
            <person name="Warfield K.L."/>
            <person name="Swenson D.L."/>
            <person name="Stein D.A."/>
            <person name="Smith J.L."/>
            <person name="Gamble C.S."/>
            <person name="Kroeker A.D."/>
            <person name="Iversen P.L."/>
            <person name="Bavari S."/>
            <person name="Muhlberger E."/>
        </authorList>
    </citation>
    <scope>FUNCTION</scope>
</reference>
<reference key="15">
    <citation type="journal article" date="2007" name="J. Virol.">
        <title>The VP35 protein of Ebola virus inhibits the antiviral effect mediated by double-stranded RNA-dependent protein kinase PKR.</title>
        <authorList>
            <person name="Feng Z."/>
            <person name="Cerveny M."/>
            <person name="Yan Z."/>
            <person name="He B."/>
        </authorList>
    </citation>
    <scope>FUNCTION</scope>
</reference>
<reference key="16">
    <citation type="journal article" date="2009" name="J. Virol.">
        <title>Ebola virus protein VP35 impairs the function of interferon regulatory factor-activating kinases IKKepsilon and TBK-1.</title>
        <authorList>
            <person name="Prins K.C."/>
            <person name="Cardenas W.B."/>
            <person name="Basler C.F."/>
        </authorList>
    </citation>
    <scope>FUNCTION</scope>
    <scope>INTERACTION WITH HOST IKBKE AND TBK1</scope>
    <scope>PHOSPHORYLATION BY HOST IKBKE</scope>
</reference>
<reference key="17">
    <citation type="journal article" date="2009" name="PLoS Pathog.">
        <title>Ebola Zaire virus blocks type I interferon production by exploiting the host SUMO modification machinery.</title>
        <authorList>
            <person name="Chang T.H."/>
            <person name="Kubota T."/>
            <person name="Matsuoka M."/>
            <person name="Jones S."/>
            <person name="Bradfute S.B."/>
            <person name="Bray M."/>
            <person name="Ozato K."/>
        </authorList>
    </citation>
    <scope>FUNCTION</scope>
    <scope>INTERACTION WITH HOST IRF7; PIAS1 AND UBE2I</scope>
</reference>
<reference key="18">
    <citation type="journal article" date="2016" name="J. Virol.">
        <title>Effects of Filovirus Interferon Antagonists on Responses of Human Monocyte-Derived Dendritic Cells to RNA Virus Infection.</title>
        <authorList>
            <person name="Yen B.C."/>
            <person name="Basler C.F."/>
        </authorList>
    </citation>
    <scope>FUNCTION</scope>
    <scope>NOMENCLATURE</scope>
</reference>
<reference key="19">
    <citation type="journal article" date="2009" name="J. Virol.">
        <title>Ebolavirus VP35 interacts with the cytoplasmic dynein light chain 8.</title>
        <authorList>
            <person name="Kubota T."/>
            <person name="Matsuoka M."/>
            <person name="Chang T.H."/>
            <person name="Bray M."/>
            <person name="Jones S."/>
            <person name="Tashiro M."/>
            <person name="Kato A."/>
            <person name="Ozato K."/>
        </authorList>
    </citation>
    <scope>INTERACTION WITH HOST DYNLL1</scope>
    <scope>MOTIF</scope>
</reference>
<reference key="20">
    <citation type="journal article" date="2013" name="Cell Host Microbe">
        <title>Mutual antagonism between the Ebola virus VP35 protein and the RIG-I activator PACT determines infection outcome.</title>
        <authorList>
            <person name="Luthra P."/>
            <person name="Ramanan P."/>
            <person name="Mire C.E."/>
            <person name="Weisend C."/>
            <person name="Tsuda Y."/>
            <person name="Yen B."/>
            <person name="Liu G."/>
            <person name="Leung D.W."/>
            <person name="Geisbert T.W."/>
            <person name="Ebihara H."/>
            <person name="Amarasinghe G.K."/>
            <person name="Basler C.F."/>
        </authorList>
    </citation>
    <scope>FUNCTION</scope>
    <scope>INTERACTION WITH HOST PRKRA; DSRNA AND POLYMERASE L</scope>
    <scope>MUTAGENESIS OF PHE-239 AND ARG-312</scope>
</reference>
<reference key="21">
    <citation type="journal article" date="2015" name="J. Virol.">
        <title>Ebola virus VP35 interaction with dynein LC8 regulates viral RNA synthesis.</title>
        <authorList>
            <person name="Luthra P."/>
            <person name="Jordan D.S."/>
            <person name="Leung D.W."/>
            <person name="Amarasinghe G.K."/>
            <person name="Basler C.F."/>
        </authorList>
    </citation>
    <scope>INTERACTION WITH HOST DYNLL1</scope>
    <scope>FUNCTION</scope>
</reference>
<reference key="22">
    <citation type="journal article" date="2017" name="Sci. Rep.">
        <title>Ebola virus VP24 interacts with NP to facilitate nucleocapsid assembly and genome packaging.</title>
        <authorList>
            <person name="Banadyga L."/>
            <person name="Hoenen T."/>
            <person name="Ambroggio X."/>
            <person name="Dunham E."/>
            <person name="Groseth A."/>
            <person name="Ebihara H."/>
        </authorList>
    </citation>
    <scope>INTERACTION WITH VP24</scope>
</reference>
<reference key="23">
    <citation type="journal article" date="2013" name="J. Biol. Chem.">
        <title>Phosphorylation of Ebola virus VP30 influences the composition of the viral nucleocapsid complex: impact on viral transcription and replication.</title>
        <authorList>
            <person name="Biedenkopf N."/>
            <person name="Hartlieb B."/>
            <person name="Hoenen T."/>
            <person name="Becker S."/>
        </authorList>
    </citation>
    <scope>INTERACTION WITH VP30</scope>
    <scope>SUBCELLULAR LOCATION</scope>
</reference>
<reference key="24">
    <citation type="journal article" date="2017" name="J. Virol.">
        <title>The Host E3-Ubiquitin Ligase TRIM6 Ubiquitinates the Ebola Virus VP35 Protein and Promotes Virus Replication.</title>
        <authorList>
            <person name="Bharaj P."/>
            <person name="Atkins C."/>
            <person name="Luthra P."/>
            <person name="Giraldo M.I."/>
            <person name="Dawes B.E."/>
            <person name="Miorin L."/>
            <person name="Johnson J.R."/>
            <person name="Krogan N.J."/>
            <person name="Basler C.F."/>
            <person name="Freiberg A.N."/>
            <person name="Rajsbaum R."/>
        </authorList>
    </citation>
    <scope>INTERACTION WITH HOST TRIM6</scope>
    <scope>SUBCELLULAR LOCATION</scope>
    <scope>UBIQUITINATION AT LYS-309</scope>
</reference>
<reference key="25">
    <citation type="journal article" date="2018" name="MBio">
        <title>Staufen1 Interacts with Multiple Components of the Ebola Virus Ribonucleoprotein and Enhances Viral RNA Synthesis.</title>
        <authorList>
            <person name="Fang J."/>
            <person name="Pietzsch C."/>
            <person name="Ramanathan P."/>
            <person name="Santos R.I."/>
            <person name="Ilinykh P.A."/>
            <person name="Garcia-Blanco M.A."/>
            <person name="Bukreyev A."/>
            <person name="Bradrick S.S."/>
        </authorList>
    </citation>
    <scope>INTERACTION WITH HOST STAU1</scope>
</reference>
<reference key="26">
    <citation type="journal article" date="2020" name="Biochem. Biophys. Res. Commun.">
        <title>Ebola virus replication is regulated by the phosphorylation of viral protein VP35.</title>
        <authorList>
            <person name="Zhu L."/>
            <person name="Gao T."/>
            <person name="Yang W."/>
            <person name="Liu Y."/>
            <person name="Liu X."/>
            <person name="Hu Y."/>
            <person name="Jin Y."/>
            <person name="Li P."/>
            <person name="Xu K."/>
            <person name="Zou G."/>
            <person name="Zhao L."/>
            <person name="Cao R."/>
            <person name="Zhong W."/>
            <person name="Xia X."/>
            <person name="Cao C."/>
        </authorList>
    </citation>
    <scope>PHOSPHORYLATION AT SER-187; SER-205; THR-206; SER-208 AND SER-317</scope>
    <scope>MUTAGENESIS OF SER-187 AND SER-317</scope>
</reference>
<reference key="27">
    <citation type="journal article" date="2020" name="Cell. Mol. Life Sci.">
        <title>Global phosphoproteomic analysis of Ebola virions reveals a novel role for VP35 phosphorylation-dependent regulation of genome transcription.</title>
        <authorList>
            <person name="Ivanov A."/>
            <person name="Ramanathan P."/>
            <person name="Parry C."/>
            <person name="Ilinykh P.A."/>
            <person name="Lin X."/>
            <person name="Petukhov M."/>
            <person name="Obukhov Y."/>
            <person name="Ammosova T."/>
            <person name="Amarasinghe G.K."/>
            <person name="Bukreyev A."/>
            <person name="Nekhai S."/>
        </authorList>
    </citation>
    <scope>PHOSPHORYLATION AT SER-187; SER-205; THR-206; THR-207; SER-208; THR-210; SER-310 AND SER-317</scope>
    <scope>INTERACTION WITH THE NUCLEOPROTEIN</scope>
    <scope>MUTAGENESIS OF THR-210</scope>
</reference>
<reference key="28">
    <citation type="journal article" date="2022" name="PLoS Pathog.">
        <title>Ubiquitination of Ebola virus VP35 at lysine 309 regulates viral transcription and assembly.</title>
        <authorList>
            <person name="van Tol S."/>
            <person name="Kalveram B."/>
            <person name="Ilinykh P.A."/>
            <person name="Ronk A."/>
            <person name="Huang K."/>
            <person name="Aguilera-Aguirre L."/>
            <person name="Bharaj P."/>
            <person name="Hage A."/>
            <person name="Atkins C."/>
            <person name="Giraldo M.I."/>
            <person name="Wakamiya M."/>
            <person name="Gonzalez-Orozco M."/>
            <person name="Warren A.N."/>
            <person name="Bukreyev A."/>
            <person name="Freiberg A.N."/>
            <person name="Rajsbaum R."/>
        </authorList>
    </citation>
    <scope>FUNCTION</scope>
    <scope>UBIQUITINATION AT LYS-309</scope>
    <scope>MUTAGENESIS OF LYS-309</scope>
</reference>
<reference key="29">
    <citation type="journal article" date="2009" name="Proc. Natl. Acad. Sci. U.S.A.">
        <title>Structure of the Ebola VP35 interferon inhibitory domain.</title>
        <authorList>
            <person name="Leung D.W."/>
            <person name="Ginder N.D."/>
            <person name="Fulton D.B."/>
            <person name="Nix J."/>
            <person name="Basler C.F."/>
            <person name="Honzatko R.B."/>
            <person name="Amarasinghe G.K."/>
        </authorList>
    </citation>
    <scope>X-RAY CRYSTALLOGRAPHY (1.40 ANGSTROMS) OF 215-340</scope>
    <scope>MUTAGENESIS OF ARG-312</scope>
    <scope>RNA-BINDING</scope>
    <scope>DOMAIN</scope>
</reference>
<reference key="30">
    <citation type="journal article" date="2010" name="J. Virol.">
        <title>Mutations abrogating VP35 interaction with double-stranded RNA render Ebola virus avirulent in guinea pigs.</title>
        <authorList>
            <person name="Prins K.C."/>
            <person name="Delpeut S."/>
            <person name="Leung D.W."/>
            <person name="Reynard O."/>
            <person name="Volchkova V.A."/>
            <person name="Reid S.P."/>
            <person name="Ramanan P."/>
            <person name="Cardenas W.B."/>
            <person name="Amarasinghe G.K."/>
            <person name="Volchkov V.E."/>
            <person name="Basler C.F."/>
        </authorList>
    </citation>
    <scope>X-RAY CRYSTALLOGRAPHY (1.70 ANGSTROMS) OF 215-340</scope>
    <scope>INTERACTION WITH DSRNA</scope>
    <scope>MUTAGENESIS OF LYS-319 AND ARG-322</scope>
</reference>
<reference key="31">
    <citation type="journal article" date="2010" name="Nat. Struct. Mol. Biol.">
        <title>Structural basis for dsRNA recognition and interferon antagonism by Ebola VP35.</title>
        <authorList>
            <person name="Leung D.W."/>
            <person name="Prins K.C."/>
            <person name="Borek D.M."/>
            <person name="Farahbakhsh M."/>
            <person name="Tufariello J.M."/>
            <person name="Ramanan P."/>
            <person name="Nix J.C."/>
            <person name="Helgeson L.A."/>
            <person name="Otwinowski Z."/>
            <person name="Honzatko R.B."/>
            <person name="Basler C.F."/>
            <person name="Amarasinghe G.K."/>
        </authorList>
    </citation>
    <scope>X-RAY CRYSTALLOGRAPHY (1.95 ANGSTROMS) OF 215-338</scope>
</reference>
<reference key="32">
    <citation type="journal article" date="2013" name="Biochemistry">
        <title>Development of RNA aptamers targeting Ebola virus VP35.</title>
        <authorList>
            <person name="Binning J.M."/>
            <person name="Wang T."/>
            <person name="Luthra P."/>
            <person name="Shabman R.S."/>
            <person name="Borek D.M."/>
            <person name="Liu G."/>
            <person name="Xu W."/>
            <person name="Leung D.W."/>
            <person name="Basler C.F."/>
            <person name="Amarasinghe G.K."/>
        </authorList>
    </citation>
    <scope>X-RAY CRYSTALLOGRAPHY (1.90 ANGSTROMS) OF 218-340</scope>
</reference>
<reference key="33">
    <citation type="journal article" date="2014" name="J. Mol. Biol.">
        <title>In silico derived small molecules bind the filovirus VP35 protein and inhibit its polymerase cofactor activity.</title>
        <authorList>
            <person name="Brown C.S."/>
            <person name="Lee M.S."/>
            <person name="Leung D.W."/>
            <person name="Wang T."/>
            <person name="Xu W."/>
            <person name="Luthra P."/>
            <person name="Anantpadma M."/>
            <person name="Shabman R.S."/>
            <person name="Melito L.M."/>
            <person name="MacMillan K.S."/>
            <person name="Borek D.M."/>
            <person name="Otwinowski Z."/>
            <person name="Ramanan P."/>
            <person name="Stubbs A.J."/>
            <person name="Peterson D.S."/>
            <person name="Binning J.M."/>
            <person name="Tonelli M."/>
            <person name="Olson M.A."/>
            <person name="Davey R.A."/>
            <person name="Ready J.M."/>
            <person name="Basler C.F."/>
            <person name="Amarasinghe G.K."/>
        </authorList>
    </citation>
    <scope>X-RAY CRYSTALLOGRAPHY (1.41 ANGSTROMS) OF 215-340</scope>
    <scope>INTERACTION WITH NUCLEOPROTEIN N</scope>
    <scope>FUNCTION</scope>
</reference>
<reference key="34">
    <citation type="journal article" date="2015" name="Cell Rep.">
        <title>An Intrinsically Disordered Peptide from Ebola Virus VP35 Controls Viral RNA Synthesis by Modulating Nucleoprotein-RNA Interactions.</title>
        <authorList>
            <person name="Leung D.W."/>
            <person name="Borek D."/>
            <person name="Luthra P."/>
            <person name="Binning J.M."/>
            <person name="Anantpadma M."/>
            <person name="Liu G."/>
            <person name="Harvey I.B."/>
            <person name="Su Z."/>
            <person name="Endlich-Frazier A."/>
            <person name="Pan J."/>
            <person name="Shabman R.S."/>
            <person name="Chiu W."/>
            <person name="Davey R.A."/>
            <person name="Otwinowski Z."/>
            <person name="Basler C.F."/>
            <person name="Amarasinghe G.K."/>
        </authorList>
    </citation>
    <scope>X-RAY CRYSTALLOGRAPHY (3.71 ANGSTROMS) OF 20-47</scope>
    <scope>INTERACTION WITH NP</scope>
    <scope>INTRINSICALLY DISORDERED REGION</scope>
    <scope>FUNCTION</scope>
</reference>
<protein>
    <recommendedName>
        <fullName>Polymerase cofactor VP35</fullName>
    </recommendedName>
    <alternativeName>
        <fullName evidence="31">Ebola VP35</fullName>
        <shortName evidence="31">eVP35</shortName>
    </alternativeName>
</protein>
<name>VP35_EBOZM</name>
<accession>Q05127</accession>
<accession>Q77LU7</accession>
<accession>Q8JS63</accession>
<gene>
    <name type="primary">VP35</name>
</gene>
<proteinExistence type="evidence at protein level"/>